<sequence length="160" mass="17338">MLTHLDSQGRANMVDVTEKAVTSREATAEAVVRMRPETLQLIQDGGHPKGDVFAVARIAGIQAAKRTHELIPLCHPLLLTSVKLELQAEAPDAVRIRARCRLAGQTGVEMEALTAASVAALTIYDMCKAVDRGMVIEQVQLLEKLGGKSGHYRKEEEGQA</sequence>
<keyword id="KW-0456">Lyase</keyword>
<keyword id="KW-0501">Molybdenum cofactor biosynthesis</keyword>
<name>MOAC_PSEA8</name>
<protein>
    <recommendedName>
        <fullName evidence="1">Cyclic pyranopterin monophosphate synthase</fullName>
        <ecNumber evidence="1">4.6.1.17</ecNumber>
    </recommendedName>
    <alternativeName>
        <fullName evidence="1">Molybdenum cofactor biosynthesis protein C</fullName>
    </alternativeName>
</protein>
<organism>
    <name type="scientific">Pseudomonas aeruginosa (strain LESB58)</name>
    <dbReference type="NCBI Taxonomy" id="557722"/>
    <lineage>
        <taxon>Bacteria</taxon>
        <taxon>Pseudomonadati</taxon>
        <taxon>Pseudomonadota</taxon>
        <taxon>Gammaproteobacteria</taxon>
        <taxon>Pseudomonadales</taxon>
        <taxon>Pseudomonadaceae</taxon>
        <taxon>Pseudomonas</taxon>
    </lineage>
</organism>
<dbReference type="EC" id="4.6.1.17" evidence="1"/>
<dbReference type="EMBL" id="FM209186">
    <property type="protein sequence ID" value="CAW25786.1"/>
    <property type="molecule type" value="Genomic_DNA"/>
</dbReference>
<dbReference type="RefSeq" id="WP_003093030.1">
    <property type="nucleotide sequence ID" value="NC_011770.1"/>
</dbReference>
<dbReference type="SMR" id="B7VBJ0"/>
<dbReference type="KEGG" id="pag:PLES_10591"/>
<dbReference type="HOGENOM" id="CLU_074693_1_1_6"/>
<dbReference type="UniPathway" id="UPA00344"/>
<dbReference type="GO" id="GO:0061799">
    <property type="term" value="F:cyclic pyranopterin monophosphate synthase activity"/>
    <property type="evidence" value="ECO:0007669"/>
    <property type="project" value="UniProtKB-UniRule"/>
</dbReference>
<dbReference type="GO" id="GO:0006777">
    <property type="term" value="P:Mo-molybdopterin cofactor biosynthetic process"/>
    <property type="evidence" value="ECO:0007669"/>
    <property type="project" value="UniProtKB-UniRule"/>
</dbReference>
<dbReference type="CDD" id="cd01420">
    <property type="entry name" value="MoaC_PE"/>
    <property type="match status" value="1"/>
</dbReference>
<dbReference type="FunFam" id="3.30.70.640:FF:000001">
    <property type="entry name" value="Cyclic pyranopterin monophosphate synthase"/>
    <property type="match status" value="1"/>
</dbReference>
<dbReference type="Gene3D" id="3.30.70.640">
    <property type="entry name" value="Molybdopterin cofactor biosynthesis C (MoaC) domain"/>
    <property type="match status" value="1"/>
</dbReference>
<dbReference type="HAMAP" id="MF_01224_B">
    <property type="entry name" value="MoaC_B"/>
    <property type="match status" value="1"/>
</dbReference>
<dbReference type="InterPro" id="IPR023045">
    <property type="entry name" value="MoaC"/>
</dbReference>
<dbReference type="InterPro" id="IPR047594">
    <property type="entry name" value="MoaC_bact/euk"/>
</dbReference>
<dbReference type="InterPro" id="IPR036522">
    <property type="entry name" value="MoaC_sf"/>
</dbReference>
<dbReference type="InterPro" id="IPR050105">
    <property type="entry name" value="MoCo_biosynth_MoaA/MoaC"/>
</dbReference>
<dbReference type="InterPro" id="IPR002820">
    <property type="entry name" value="Mopterin_CF_biosynth-C_dom"/>
</dbReference>
<dbReference type="NCBIfam" id="TIGR00581">
    <property type="entry name" value="moaC"/>
    <property type="match status" value="1"/>
</dbReference>
<dbReference type="NCBIfam" id="NF006870">
    <property type="entry name" value="PRK09364.1"/>
    <property type="match status" value="1"/>
</dbReference>
<dbReference type="PANTHER" id="PTHR22960:SF29">
    <property type="entry name" value="CYCLIC PYRANOPTERIN MONOPHOSPHATE SYNTHASE"/>
    <property type="match status" value="1"/>
</dbReference>
<dbReference type="PANTHER" id="PTHR22960">
    <property type="entry name" value="MOLYBDOPTERIN COFACTOR SYNTHESIS PROTEIN A"/>
    <property type="match status" value="1"/>
</dbReference>
<dbReference type="Pfam" id="PF01967">
    <property type="entry name" value="MoaC"/>
    <property type="match status" value="1"/>
</dbReference>
<dbReference type="SUPFAM" id="SSF55040">
    <property type="entry name" value="Molybdenum cofactor biosynthesis protein C, MoaC"/>
    <property type="match status" value="1"/>
</dbReference>
<feature type="chain" id="PRO_1000139285" description="Cyclic pyranopterin monophosphate synthase">
    <location>
        <begin position="1"/>
        <end position="160"/>
    </location>
</feature>
<feature type="active site" evidence="1">
    <location>
        <position position="125"/>
    </location>
</feature>
<feature type="binding site" evidence="1">
    <location>
        <begin position="73"/>
        <end position="75"/>
    </location>
    <ligand>
        <name>substrate</name>
    </ligand>
</feature>
<feature type="binding site" evidence="1">
    <location>
        <begin position="110"/>
        <end position="111"/>
    </location>
    <ligand>
        <name>substrate</name>
    </ligand>
</feature>
<proteinExistence type="inferred from homology"/>
<reference key="1">
    <citation type="journal article" date="2009" name="Genome Res.">
        <title>Newly introduced genomic prophage islands are critical determinants of in vivo competitiveness in the Liverpool epidemic strain of Pseudomonas aeruginosa.</title>
        <authorList>
            <person name="Winstanley C."/>
            <person name="Langille M.G.I."/>
            <person name="Fothergill J.L."/>
            <person name="Kukavica-Ibrulj I."/>
            <person name="Paradis-Bleau C."/>
            <person name="Sanschagrin F."/>
            <person name="Thomson N.R."/>
            <person name="Winsor G.L."/>
            <person name="Quail M.A."/>
            <person name="Lennard N."/>
            <person name="Bignell A."/>
            <person name="Clarke L."/>
            <person name="Seeger K."/>
            <person name="Saunders D."/>
            <person name="Harris D."/>
            <person name="Parkhill J."/>
            <person name="Hancock R.E.W."/>
            <person name="Brinkman F.S.L."/>
            <person name="Levesque R.C."/>
        </authorList>
    </citation>
    <scope>NUCLEOTIDE SEQUENCE [LARGE SCALE GENOMIC DNA]</scope>
    <source>
        <strain>LESB58</strain>
    </source>
</reference>
<gene>
    <name evidence="1" type="primary">moaC</name>
    <name type="ordered locus">PLES_10591</name>
</gene>
<evidence type="ECO:0000255" key="1">
    <source>
        <dbReference type="HAMAP-Rule" id="MF_01224"/>
    </source>
</evidence>
<accession>B7VBJ0</accession>
<comment type="function">
    <text evidence="1">Catalyzes the conversion of (8S)-3',8-cyclo-7,8-dihydroguanosine 5'-triphosphate to cyclic pyranopterin monophosphate (cPMP).</text>
</comment>
<comment type="catalytic activity">
    <reaction evidence="1">
        <text>(8S)-3',8-cyclo-7,8-dihydroguanosine 5'-triphosphate = cyclic pyranopterin phosphate + diphosphate</text>
        <dbReference type="Rhea" id="RHEA:49580"/>
        <dbReference type="ChEBI" id="CHEBI:33019"/>
        <dbReference type="ChEBI" id="CHEBI:59648"/>
        <dbReference type="ChEBI" id="CHEBI:131766"/>
        <dbReference type="EC" id="4.6.1.17"/>
    </reaction>
</comment>
<comment type="pathway">
    <text evidence="1">Cofactor biosynthesis; molybdopterin biosynthesis.</text>
</comment>
<comment type="subunit">
    <text evidence="1">Homohexamer; trimer of dimers.</text>
</comment>
<comment type="similarity">
    <text evidence="1">Belongs to the MoaC family.</text>
</comment>